<accession>Q5Z0V1</accession>
<name>RNPH_NOCFA</name>
<reference key="1">
    <citation type="journal article" date="2004" name="Proc. Natl. Acad. Sci. U.S.A.">
        <title>The complete genomic sequence of Nocardia farcinica IFM 10152.</title>
        <authorList>
            <person name="Ishikawa J."/>
            <person name="Yamashita A."/>
            <person name="Mikami Y."/>
            <person name="Hoshino Y."/>
            <person name="Kurita H."/>
            <person name="Hotta K."/>
            <person name="Shiba T."/>
            <person name="Hattori M."/>
        </authorList>
    </citation>
    <scope>NUCLEOTIDE SEQUENCE [LARGE SCALE GENOMIC DNA]</scope>
    <source>
        <strain>IFM 10152</strain>
    </source>
</reference>
<sequence>MSRRADGRADDELREVRITRGFTTHPAGSVLVEFGQTRVMCTASVTEGVPAWRRDSGLGWLTAEYAMLPAATHTRSGRESVKGRVGGRTQEISRLVGRSLRACIDLAAIGENTIAIDCDVLQADGGTRTAAITGAYVALADAVTWLGAAGALADPQPISCAIAAVSVGVVDGRVRLDLPYEEDSRAEVDMNVVATDTGTLVEIQGTGEGATFPRSTLDKLLDAALAGCEQLFAVQKEALALPYPGVLPEPAEPAKRK</sequence>
<comment type="function">
    <text evidence="1">Phosphorolytic 3'-5' exoribonuclease that plays an important role in tRNA 3'-end maturation. Removes nucleotide residues following the 3'-CCA terminus of tRNAs; can also add nucleotides to the ends of RNA molecules by using nucleoside diphosphates as substrates, but this may not be physiologically important. Probably plays a role in initiation of 16S rRNA degradation (leading to ribosome degradation) during starvation.</text>
</comment>
<comment type="catalytic activity">
    <reaction evidence="1">
        <text>tRNA(n+1) + phosphate = tRNA(n) + a ribonucleoside 5'-diphosphate</text>
        <dbReference type="Rhea" id="RHEA:10628"/>
        <dbReference type="Rhea" id="RHEA-COMP:17343"/>
        <dbReference type="Rhea" id="RHEA-COMP:17344"/>
        <dbReference type="ChEBI" id="CHEBI:43474"/>
        <dbReference type="ChEBI" id="CHEBI:57930"/>
        <dbReference type="ChEBI" id="CHEBI:173114"/>
        <dbReference type="EC" id="2.7.7.56"/>
    </reaction>
</comment>
<comment type="subunit">
    <text evidence="1">Homohexameric ring arranged as a trimer of dimers.</text>
</comment>
<comment type="similarity">
    <text evidence="1">Belongs to the RNase PH family.</text>
</comment>
<protein>
    <recommendedName>
        <fullName evidence="1">Ribonuclease PH</fullName>
        <shortName evidence="1">RNase PH</shortName>
        <ecNumber evidence="1">2.7.7.56</ecNumber>
    </recommendedName>
    <alternativeName>
        <fullName evidence="1">tRNA nucleotidyltransferase</fullName>
    </alternativeName>
</protein>
<dbReference type="EC" id="2.7.7.56" evidence="1"/>
<dbReference type="EMBL" id="AP006618">
    <property type="protein sequence ID" value="BAD55940.1"/>
    <property type="molecule type" value="Genomic_DNA"/>
</dbReference>
<dbReference type="RefSeq" id="WP_011207625.1">
    <property type="nucleotide sequence ID" value="NC_006361.1"/>
</dbReference>
<dbReference type="SMR" id="Q5Z0V1"/>
<dbReference type="STRING" id="247156.NFA_10950"/>
<dbReference type="GeneID" id="61131920"/>
<dbReference type="KEGG" id="nfa:NFA_10950"/>
<dbReference type="eggNOG" id="COG0689">
    <property type="taxonomic scope" value="Bacteria"/>
</dbReference>
<dbReference type="HOGENOM" id="CLU_050858_0_0_11"/>
<dbReference type="OrthoDB" id="9802265at2"/>
<dbReference type="Proteomes" id="UP000006820">
    <property type="component" value="Chromosome"/>
</dbReference>
<dbReference type="GO" id="GO:0000175">
    <property type="term" value="F:3'-5'-RNA exonuclease activity"/>
    <property type="evidence" value="ECO:0007669"/>
    <property type="project" value="UniProtKB-UniRule"/>
</dbReference>
<dbReference type="GO" id="GO:0000049">
    <property type="term" value="F:tRNA binding"/>
    <property type="evidence" value="ECO:0007669"/>
    <property type="project" value="UniProtKB-UniRule"/>
</dbReference>
<dbReference type="GO" id="GO:0009022">
    <property type="term" value="F:tRNA nucleotidyltransferase activity"/>
    <property type="evidence" value="ECO:0007669"/>
    <property type="project" value="UniProtKB-UniRule"/>
</dbReference>
<dbReference type="GO" id="GO:0016075">
    <property type="term" value="P:rRNA catabolic process"/>
    <property type="evidence" value="ECO:0007669"/>
    <property type="project" value="UniProtKB-UniRule"/>
</dbReference>
<dbReference type="GO" id="GO:0006364">
    <property type="term" value="P:rRNA processing"/>
    <property type="evidence" value="ECO:0007669"/>
    <property type="project" value="UniProtKB-KW"/>
</dbReference>
<dbReference type="GO" id="GO:0008033">
    <property type="term" value="P:tRNA processing"/>
    <property type="evidence" value="ECO:0007669"/>
    <property type="project" value="UniProtKB-UniRule"/>
</dbReference>
<dbReference type="CDD" id="cd11362">
    <property type="entry name" value="RNase_PH_bact"/>
    <property type="match status" value="1"/>
</dbReference>
<dbReference type="FunFam" id="3.30.230.70:FF:000003">
    <property type="entry name" value="Ribonuclease PH"/>
    <property type="match status" value="1"/>
</dbReference>
<dbReference type="Gene3D" id="3.30.230.70">
    <property type="entry name" value="GHMP Kinase, N-terminal domain"/>
    <property type="match status" value="1"/>
</dbReference>
<dbReference type="HAMAP" id="MF_00564">
    <property type="entry name" value="RNase_PH"/>
    <property type="match status" value="1"/>
</dbReference>
<dbReference type="InterPro" id="IPR001247">
    <property type="entry name" value="ExoRNase_PH_dom1"/>
</dbReference>
<dbReference type="InterPro" id="IPR015847">
    <property type="entry name" value="ExoRNase_PH_dom2"/>
</dbReference>
<dbReference type="InterPro" id="IPR036345">
    <property type="entry name" value="ExoRNase_PH_dom2_sf"/>
</dbReference>
<dbReference type="InterPro" id="IPR027408">
    <property type="entry name" value="PNPase/RNase_PH_dom_sf"/>
</dbReference>
<dbReference type="InterPro" id="IPR020568">
    <property type="entry name" value="Ribosomal_Su5_D2-typ_SF"/>
</dbReference>
<dbReference type="InterPro" id="IPR050080">
    <property type="entry name" value="RNase_PH"/>
</dbReference>
<dbReference type="InterPro" id="IPR002381">
    <property type="entry name" value="RNase_PH_bac-type"/>
</dbReference>
<dbReference type="InterPro" id="IPR018336">
    <property type="entry name" value="RNase_PH_CS"/>
</dbReference>
<dbReference type="NCBIfam" id="TIGR01966">
    <property type="entry name" value="RNasePH"/>
    <property type="match status" value="1"/>
</dbReference>
<dbReference type="PANTHER" id="PTHR11953">
    <property type="entry name" value="EXOSOME COMPLEX COMPONENT"/>
    <property type="match status" value="1"/>
</dbReference>
<dbReference type="PANTHER" id="PTHR11953:SF0">
    <property type="entry name" value="EXOSOME COMPLEX COMPONENT RRP41"/>
    <property type="match status" value="1"/>
</dbReference>
<dbReference type="Pfam" id="PF01138">
    <property type="entry name" value="RNase_PH"/>
    <property type="match status" value="1"/>
</dbReference>
<dbReference type="Pfam" id="PF03725">
    <property type="entry name" value="RNase_PH_C"/>
    <property type="match status" value="1"/>
</dbReference>
<dbReference type="SUPFAM" id="SSF55666">
    <property type="entry name" value="Ribonuclease PH domain 2-like"/>
    <property type="match status" value="1"/>
</dbReference>
<dbReference type="SUPFAM" id="SSF54211">
    <property type="entry name" value="Ribosomal protein S5 domain 2-like"/>
    <property type="match status" value="1"/>
</dbReference>
<dbReference type="PROSITE" id="PS01277">
    <property type="entry name" value="RIBONUCLEASE_PH"/>
    <property type="match status" value="1"/>
</dbReference>
<evidence type="ECO:0000255" key="1">
    <source>
        <dbReference type="HAMAP-Rule" id="MF_00564"/>
    </source>
</evidence>
<feature type="chain" id="PRO_0000139916" description="Ribonuclease PH">
    <location>
        <begin position="1"/>
        <end position="257"/>
    </location>
</feature>
<feature type="binding site" evidence="1">
    <location>
        <position position="88"/>
    </location>
    <ligand>
        <name>phosphate</name>
        <dbReference type="ChEBI" id="CHEBI:43474"/>
        <note>substrate</note>
    </ligand>
</feature>
<feature type="binding site" evidence="1">
    <location>
        <begin position="126"/>
        <end position="128"/>
    </location>
    <ligand>
        <name>phosphate</name>
        <dbReference type="ChEBI" id="CHEBI:43474"/>
        <note>substrate</note>
    </ligand>
</feature>
<keyword id="KW-0548">Nucleotidyltransferase</keyword>
<keyword id="KW-1185">Reference proteome</keyword>
<keyword id="KW-0694">RNA-binding</keyword>
<keyword id="KW-0698">rRNA processing</keyword>
<keyword id="KW-0808">Transferase</keyword>
<keyword id="KW-0819">tRNA processing</keyword>
<keyword id="KW-0820">tRNA-binding</keyword>
<proteinExistence type="inferred from homology"/>
<gene>
    <name evidence="1" type="primary">rph</name>
    <name type="ordered locus">NFA_10950</name>
</gene>
<organism>
    <name type="scientific">Nocardia farcinica (strain IFM 10152)</name>
    <dbReference type="NCBI Taxonomy" id="247156"/>
    <lineage>
        <taxon>Bacteria</taxon>
        <taxon>Bacillati</taxon>
        <taxon>Actinomycetota</taxon>
        <taxon>Actinomycetes</taxon>
        <taxon>Mycobacteriales</taxon>
        <taxon>Nocardiaceae</taxon>
        <taxon>Nocardia</taxon>
    </lineage>
</organism>